<accession>B5R679</accession>
<gene>
    <name evidence="1" type="primary">nei</name>
    <name type="ordered locus">SG0711</name>
</gene>
<protein>
    <recommendedName>
        <fullName evidence="1">Endonuclease 8</fullName>
    </recommendedName>
    <alternativeName>
        <fullName evidence="1">DNA glycosylase/AP lyase Nei</fullName>
        <ecNumber evidence="1">3.2.2.-</ecNumber>
        <ecNumber evidence="1">4.2.99.18</ecNumber>
    </alternativeName>
    <alternativeName>
        <fullName evidence="1">DNA-(apurinic or apyrimidinic site) lyase Nei</fullName>
    </alternativeName>
    <alternativeName>
        <fullName evidence="1">Endonuclease VIII</fullName>
    </alternativeName>
</protein>
<sequence>MPEGPEIRRAADNLEAAIKGKPLTDVWFAFAQLKPYESQLTGQLVTRIETRGKALLTHFSNGLTLYSHNQLYGVWRVIDTGEIPQTTRILRVRLQTADKTILLYSASDIEMLTAEQLTTHPFLQRVGPDVLDARLTPEEVKARLLSPRFRNRQFSGLLLDQAFLAGLGNYLRVEILWQVGLTGQHKAKDLNEAQLNALSHALLDIPRLSYTTRGQSDENKHHGALFRFKVFHRDGEACERCGGIIEKTTLSSRPFYWCPHCQK</sequence>
<proteinExistence type="inferred from homology"/>
<organism>
    <name type="scientific">Salmonella gallinarum (strain 287/91 / NCTC 13346)</name>
    <dbReference type="NCBI Taxonomy" id="550538"/>
    <lineage>
        <taxon>Bacteria</taxon>
        <taxon>Pseudomonadati</taxon>
        <taxon>Pseudomonadota</taxon>
        <taxon>Gammaproteobacteria</taxon>
        <taxon>Enterobacterales</taxon>
        <taxon>Enterobacteriaceae</taxon>
        <taxon>Salmonella</taxon>
    </lineage>
</organism>
<feature type="initiator methionine" description="Removed" evidence="1">
    <location>
        <position position="1"/>
    </location>
</feature>
<feature type="chain" id="PRO_1000139942" description="Endonuclease 8">
    <location>
        <begin position="2"/>
        <end position="263"/>
    </location>
</feature>
<feature type="zinc finger region" description="FPG-type" evidence="1">
    <location>
        <begin position="229"/>
        <end position="263"/>
    </location>
</feature>
<feature type="active site" description="Schiff-base intermediate with DNA" evidence="1">
    <location>
        <position position="2"/>
    </location>
</feature>
<feature type="active site" description="Proton donor" evidence="1">
    <location>
        <position position="3"/>
    </location>
</feature>
<feature type="active site" description="Proton donor; for beta-elimination activity" evidence="1">
    <location>
        <position position="53"/>
    </location>
</feature>
<feature type="active site" description="Proton donor; for delta-elimination activity" evidence="1">
    <location>
        <position position="253"/>
    </location>
</feature>
<feature type="binding site" evidence="1">
    <location>
        <position position="70"/>
    </location>
    <ligand>
        <name>DNA</name>
        <dbReference type="ChEBI" id="CHEBI:16991"/>
    </ligand>
</feature>
<feature type="binding site" evidence="1">
    <location>
        <position position="125"/>
    </location>
    <ligand>
        <name>DNA</name>
        <dbReference type="ChEBI" id="CHEBI:16991"/>
    </ligand>
</feature>
<feature type="binding site" evidence="1">
    <location>
        <position position="169"/>
    </location>
    <ligand>
        <name>DNA</name>
        <dbReference type="ChEBI" id="CHEBI:16991"/>
    </ligand>
</feature>
<evidence type="ECO:0000255" key="1">
    <source>
        <dbReference type="HAMAP-Rule" id="MF_01253"/>
    </source>
</evidence>
<keyword id="KW-0227">DNA damage</keyword>
<keyword id="KW-0234">DNA repair</keyword>
<keyword id="KW-0238">DNA-binding</keyword>
<keyword id="KW-0326">Glycosidase</keyword>
<keyword id="KW-0378">Hydrolase</keyword>
<keyword id="KW-0456">Lyase</keyword>
<keyword id="KW-0479">Metal-binding</keyword>
<keyword id="KW-0511">Multifunctional enzyme</keyword>
<keyword id="KW-0862">Zinc</keyword>
<keyword id="KW-0863">Zinc-finger</keyword>
<name>END8_SALG2</name>
<dbReference type="EC" id="3.2.2.-" evidence="1"/>
<dbReference type="EC" id="4.2.99.18" evidence="1"/>
<dbReference type="EMBL" id="AM933173">
    <property type="protein sequence ID" value="CAR36607.1"/>
    <property type="molecule type" value="Genomic_DNA"/>
</dbReference>
<dbReference type="RefSeq" id="WP_001113969.1">
    <property type="nucleotide sequence ID" value="NC_011274.1"/>
</dbReference>
<dbReference type="SMR" id="B5R679"/>
<dbReference type="KEGG" id="seg:SG0711"/>
<dbReference type="HOGENOM" id="CLU_038423_2_2_6"/>
<dbReference type="Proteomes" id="UP000008321">
    <property type="component" value="Chromosome"/>
</dbReference>
<dbReference type="GO" id="GO:0140078">
    <property type="term" value="F:class I DNA-(apurinic or apyrimidinic site) endonuclease activity"/>
    <property type="evidence" value="ECO:0007669"/>
    <property type="project" value="UniProtKB-EC"/>
</dbReference>
<dbReference type="GO" id="GO:0003684">
    <property type="term" value="F:damaged DNA binding"/>
    <property type="evidence" value="ECO:0007669"/>
    <property type="project" value="InterPro"/>
</dbReference>
<dbReference type="GO" id="GO:0000703">
    <property type="term" value="F:oxidized pyrimidine nucleobase lesion DNA N-glycosylase activity"/>
    <property type="evidence" value="ECO:0007669"/>
    <property type="project" value="UniProtKB-UniRule"/>
</dbReference>
<dbReference type="GO" id="GO:0008270">
    <property type="term" value="F:zinc ion binding"/>
    <property type="evidence" value="ECO:0007669"/>
    <property type="project" value="UniProtKB-UniRule"/>
</dbReference>
<dbReference type="GO" id="GO:0006284">
    <property type="term" value="P:base-excision repair"/>
    <property type="evidence" value="ECO:0007669"/>
    <property type="project" value="InterPro"/>
</dbReference>
<dbReference type="CDD" id="cd08965">
    <property type="entry name" value="EcNei-like_N"/>
    <property type="match status" value="1"/>
</dbReference>
<dbReference type="FunFam" id="1.10.8.50:FF:000005">
    <property type="entry name" value="Endonuclease 8"/>
    <property type="match status" value="1"/>
</dbReference>
<dbReference type="FunFam" id="3.20.190.10:FF:000002">
    <property type="entry name" value="Endonuclease 8"/>
    <property type="match status" value="1"/>
</dbReference>
<dbReference type="Gene3D" id="1.10.8.50">
    <property type="match status" value="1"/>
</dbReference>
<dbReference type="Gene3D" id="3.20.190.10">
    <property type="entry name" value="MutM-like, N-terminal"/>
    <property type="match status" value="1"/>
</dbReference>
<dbReference type="HAMAP" id="MF_01253">
    <property type="entry name" value="Endonuclease_8"/>
    <property type="match status" value="1"/>
</dbReference>
<dbReference type="InterPro" id="IPR015886">
    <property type="entry name" value="DNA_glyclase/AP_lyase_DNA-bd"/>
</dbReference>
<dbReference type="InterPro" id="IPR015887">
    <property type="entry name" value="DNA_glyclase_Znf_dom_DNA_BS"/>
</dbReference>
<dbReference type="InterPro" id="IPR044091">
    <property type="entry name" value="EcNei-like_N"/>
</dbReference>
<dbReference type="InterPro" id="IPR023713">
    <property type="entry name" value="Endonuclease-VIII"/>
</dbReference>
<dbReference type="InterPro" id="IPR012319">
    <property type="entry name" value="FPG_cat"/>
</dbReference>
<dbReference type="InterPro" id="IPR035937">
    <property type="entry name" value="MutM-like_N-ter"/>
</dbReference>
<dbReference type="InterPro" id="IPR010979">
    <property type="entry name" value="Ribosomal_uS13-like_H2TH"/>
</dbReference>
<dbReference type="InterPro" id="IPR000214">
    <property type="entry name" value="Znf_DNA_glyclase/AP_lyase"/>
</dbReference>
<dbReference type="InterPro" id="IPR010663">
    <property type="entry name" value="Znf_FPG/IleRS"/>
</dbReference>
<dbReference type="NCBIfam" id="NF007763">
    <property type="entry name" value="PRK10445.1"/>
    <property type="match status" value="1"/>
</dbReference>
<dbReference type="PANTHER" id="PTHR42697">
    <property type="entry name" value="ENDONUCLEASE 8"/>
    <property type="match status" value="1"/>
</dbReference>
<dbReference type="PANTHER" id="PTHR42697:SF1">
    <property type="entry name" value="ENDONUCLEASE 8"/>
    <property type="match status" value="1"/>
</dbReference>
<dbReference type="Pfam" id="PF01149">
    <property type="entry name" value="Fapy_DNA_glyco"/>
    <property type="match status" value="1"/>
</dbReference>
<dbReference type="Pfam" id="PF06831">
    <property type="entry name" value="H2TH"/>
    <property type="match status" value="1"/>
</dbReference>
<dbReference type="Pfam" id="PF06827">
    <property type="entry name" value="zf-FPG_IleRS"/>
    <property type="match status" value="1"/>
</dbReference>
<dbReference type="SMART" id="SM00898">
    <property type="entry name" value="Fapy_DNA_glyco"/>
    <property type="match status" value="1"/>
</dbReference>
<dbReference type="SMART" id="SM01232">
    <property type="entry name" value="H2TH"/>
    <property type="match status" value="1"/>
</dbReference>
<dbReference type="SUPFAM" id="SSF57716">
    <property type="entry name" value="Glucocorticoid receptor-like (DNA-binding domain)"/>
    <property type="match status" value="1"/>
</dbReference>
<dbReference type="SUPFAM" id="SSF81624">
    <property type="entry name" value="N-terminal domain of MutM-like DNA repair proteins"/>
    <property type="match status" value="1"/>
</dbReference>
<dbReference type="SUPFAM" id="SSF46946">
    <property type="entry name" value="S13-like H2TH domain"/>
    <property type="match status" value="1"/>
</dbReference>
<dbReference type="PROSITE" id="PS51068">
    <property type="entry name" value="FPG_CAT"/>
    <property type="match status" value="1"/>
</dbReference>
<dbReference type="PROSITE" id="PS01242">
    <property type="entry name" value="ZF_FPG_1"/>
    <property type="match status" value="1"/>
</dbReference>
<dbReference type="PROSITE" id="PS51066">
    <property type="entry name" value="ZF_FPG_2"/>
    <property type="match status" value="1"/>
</dbReference>
<comment type="function">
    <text evidence="1">Involved in base excision repair of DNA damaged by oxidation or by mutagenic agents. Acts as a DNA glycosylase that recognizes and removes damaged bases. Has a preference for oxidized pyrimidines, such as thymine glycol, 5,6-dihydrouracil and 5,6-dihydrothymine. Has AP (apurinic/apyrimidinic) lyase activity and introduces nicks in the DNA strand. Cleaves the DNA backbone by beta-delta elimination to generate a single-strand break at the site of the removed base with both 3'- and 5'-phosphates.</text>
</comment>
<comment type="catalytic activity">
    <reaction evidence="1">
        <text>2'-deoxyribonucleotide-(2'-deoxyribose 5'-phosphate)-2'-deoxyribonucleotide-DNA = a 3'-end 2'-deoxyribonucleotide-(2,3-dehydro-2,3-deoxyribose 5'-phosphate)-DNA + a 5'-end 5'-phospho-2'-deoxyribonucleoside-DNA + H(+)</text>
        <dbReference type="Rhea" id="RHEA:66592"/>
        <dbReference type="Rhea" id="RHEA-COMP:13180"/>
        <dbReference type="Rhea" id="RHEA-COMP:16897"/>
        <dbReference type="Rhea" id="RHEA-COMP:17067"/>
        <dbReference type="ChEBI" id="CHEBI:15378"/>
        <dbReference type="ChEBI" id="CHEBI:136412"/>
        <dbReference type="ChEBI" id="CHEBI:157695"/>
        <dbReference type="ChEBI" id="CHEBI:167181"/>
        <dbReference type="EC" id="4.2.99.18"/>
    </reaction>
</comment>
<comment type="cofactor">
    <cofactor evidence="1">
        <name>Zn(2+)</name>
        <dbReference type="ChEBI" id="CHEBI:29105"/>
    </cofactor>
    <text evidence="1">Binds 1 zinc ion per subunit.</text>
</comment>
<comment type="similarity">
    <text evidence="1">Belongs to the FPG family.</text>
</comment>
<reference key="1">
    <citation type="journal article" date="2008" name="Genome Res.">
        <title>Comparative genome analysis of Salmonella enteritidis PT4 and Salmonella gallinarum 287/91 provides insights into evolutionary and host adaptation pathways.</title>
        <authorList>
            <person name="Thomson N.R."/>
            <person name="Clayton D.J."/>
            <person name="Windhorst D."/>
            <person name="Vernikos G."/>
            <person name="Davidson S."/>
            <person name="Churcher C."/>
            <person name="Quail M.A."/>
            <person name="Stevens M."/>
            <person name="Jones M.A."/>
            <person name="Watson M."/>
            <person name="Barron A."/>
            <person name="Layton A."/>
            <person name="Pickard D."/>
            <person name="Kingsley R.A."/>
            <person name="Bignell A."/>
            <person name="Clark L."/>
            <person name="Harris B."/>
            <person name="Ormond D."/>
            <person name="Abdellah Z."/>
            <person name="Brooks K."/>
            <person name="Cherevach I."/>
            <person name="Chillingworth T."/>
            <person name="Woodward J."/>
            <person name="Norberczak H."/>
            <person name="Lord A."/>
            <person name="Arrowsmith C."/>
            <person name="Jagels K."/>
            <person name="Moule S."/>
            <person name="Mungall K."/>
            <person name="Saunders M."/>
            <person name="Whitehead S."/>
            <person name="Chabalgoity J.A."/>
            <person name="Maskell D."/>
            <person name="Humphreys T."/>
            <person name="Roberts M."/>
            <person name="Barrow P.A."/>
            <person name="Dougan G."/>
            <person name="Parkhill J."/>
        </authorList>
    </citation>
    <scope>NUCLEOTIDE SEQUENCE [LARGE SCALE GENOMIC DNA]</scope>
    <source>
        <strain>287/91 / NCTC 13346</strain>
    </source>
</reference>